<sequence>MATGGGAEEERKRGRPQLLPPARPAARGEEADGGREKMGWAQVVKNLAEKKGEFREPRPPRREEESGGGGGSAGLGGPAGLAAPDLGDFPPAGRGDPKGRRRDPAGEAVDPRKKKGAAEAGRRKKAEAAAAAMATPARPGEAEDAAERPLQDEPAAAAGPGKGRFLVRICFQGDEGACPTRDFVVGALILRSIGMDPSDIYAVIQIPGSREFDVSFRSAEKLALFLRVYEEKREQEDCWENFVVLGRSKSSLKTLFILFRNETVDVEDIVTWLKRHCDVLAVPVKVTDRFGIWTGEYKCEIELRQGEGGVRHLPGAFFLGAERGYSWYKGQPKTCFKCGSRTHMSGSCTQDRCFRCGEEGHLSPYCRKGIVCNLCGKRGHAFAQCPKAVHNSVAAQLTGVAGH</sequence>
<dbReference type="EMBL" id="AL034548">
    <property type="status" value="NOT_ANNOTATED_CDS"/>
    <property type="molecule type" value="Genomic_DNA"/>
</dbReference>
<dbReference type="EMBL" id="BC069238">
    <property type="protein sequence ID" value="AAH69238.1"/>
    <property type="molecule type" value="mRNA"/>
</dbReference>
<dbReference type="EMBL" id="BC107584">
    <property type="protein sequence ID" value="AAI07585.1"/>
    <property type="molecule type" value="mRNA"/>
</dbReference>
<dbReference type="CCDS" id="CCDS42844.1">
    <molecule id="Q9NUD5-1"/>
</dbReference>
<dbReference type="RefSeq" id="NP_149080.2">
    <molecule id="Q9NUD5-1"/>
    <property type="nucleotide sequence ID" value="NM_033089.6"/>
</dbReference>
<dbReference type="BioGRID" id="124492">
    <property type="interactions" value="193"/>
</dbReference>
<dbReference type="FunCoup" id="Q9NUD5">
    <property type="interactions" value="712"/>
</dbReference>
<dbReference type="IntAct" id="Q9NUD5">
    <property type="interactions" value="114"/>
</dbReference>
<dbReference type="MINT" id="Q9NUD5"/>
<dbReference type="STRING" id="9606.ENSP00000484056"/>
<dbReference type="GlyGen" id="Q9NUD5">
    <property type="glycosylation" value="1 site"/>
</dbReference>
<dbReference type="iPTMnet" id="Q9NUD5"/>
<dbReference type="PhosphoSitePlus" id="Q9NUD5"/>
<dbReference type="BioMuta" id="ZCCHC3"/>
<dbReference type="DMDM" id="23396534"/>
<dbReference type="jPOST" id="Q9NUD5"/>
<dbReference type="MassIVE" id="Q9NUD5"/>
<dbReference type="PaxDb" id="9606-ENSP00000484056"/>
<dbReference type="PeptideAtlas" id="Q9NUD5"/>
<dbReference type="ProteomicsDB" id="82664">
    <molecule id="Q9NUD5-1"/>
</dbReference>
<dbReference type="Pumba" id="Q9NUD5"/>
<dbReference type="Antibodypedia" id="72721">
    <property type="antibodies" value="61 antibodies from 21 providers"/>
</dbReference>
<dbReference type="DNASU" id="85364"/>
<dbReference type="Ensembl" id="ENST00000500893.4">
    <molecule id="Q9NUD5-1"/>
    <property type="protein sequence ID" value="ENSP00000484056.1"/>
    <property type="gene ID" value="ENSG00000247315.4"/>
</dbReference>
<dbReference type="GeneID" id="85364"/>
<dbReference type="KEGG" id="hsa:85364"/>
<dbReference type="MANE-Select" id="ENST00000500893.4">
    <property type="protein sequence ID" value="ENSP00000484056.1"/>
    <property type="RefSeq nucleotide sequence ID" value="NM_033089.7"/>
    <property type="RefSeq protein sequence ID" value="NP_149080.2"/>
</dbReference>
<dbReference type="UCSC" id="uc032oxz.2">
    <molecule id="Q9NUD5-1"/>
    <property type="organism name" value="human"/>
</dbReference>
<dbReference type="AGR" id="HGNC:16230"/>
<dbReference type="CTD" id="85364"/>
<dbReference type="DisGeNET" id="85364"/>
<dbReference type="GeneCards" id="ZCCHC3"/>
<dbReference type="HGNC" id="HGNC:16230">
    <property type="gene designation" value="ZCCHC3"/>
</dbReference>
<dbReference type="HPA" id="ENSG00000247315">
    <property type="expression patterns" value="Low tissue specificity"/>
</dbReference>
<dbReference type="MIM" id="618326">
    <property type="type" value="gene"/>
</dbReference>
<dbReference type="neXtProt" id="NX_Q9NUD5"/>
<dbReference type="OpenTargets" id="ENSG00000247315"/>
<dbReference type="PharmGKB" id="PA25806"/>
<dbReference type="VEuPathDB" id="HostDB:ENSG00000247315"/>
<dbReference type="eggNOG" id="KOG4400">
    <property type="taxonomic scope" value="Eukaryota"/>
</dbReference>
<dbReference type="GeneTree" id="ENSGT00530000063983"/>
<dbReference type="HOGENOM" id="CLU_723532_0_0_1"/>
<dbReference type="InParanoid" id="Q9NUD5"/>
<dbReference type="OMA" id="QGDESAC"/>
<dbReference type="OrthoDB" id="3863715at2759"/>
<dbReference type="PAN-GO" id="Q9NUD5">
    <property type="GO annotations" value="8 GO annotations based on evolutionary models"/>
</dbReference>
<dbReference type="PhylomeDB" id="Q9NUD5"/>
<dbReference type="TreeFam" id="TF334042"/>
<dbReference type="PathwayCommons" id="Q9NUD5"/>
<dbReference type="SignaLink" id="Q9NUD5"/>
<dbReference type="BioGRID-ORCS" id="85364">
    <property type="hits" value="19 hits in 1160 CRISPR screens"/>
</dbReference>
<dbReference type="CD-CODE" id="232F8A39">
    <property type="entry name" value="P-body"/>
</dbReference>
<dbReference type="CD-CODE" id="DEE660B4">
    <property type="entry name" value="Stress granule"/>
</dbReference>
<dbReference type="ChiTaRS" id="ZCCHC3">
    <property type="organism name" value="human"/>
</dbReference>
<dbReference type="GenomeRNAi" id="85364"/>
<dbReference type="Pharos" id="Q9NUD5">
    <property type="development level" value="Tdark"/>
</dbReference>
<dbReference type="PRO" id="PR:Q9NUD5"/>
<dbReference type="Proteomes" id="UP000005640">
    <property type="component" value="Chromosome 20"/>
</dbReference>
<dbReference type="RNAct" id="Q9NUD5">
    <property type="molecule type" value="protein"/>
</dbReference>
<dbReference type="Bgee" id="ENSG00000247315">
    <property type="expression patterns" value="Expressed in ileal mucosa and 181 other cell types or tissues"/>
</dbReference>
<dbReference type="GO" id="GO:0005737">
    <property type="term" value="C:cytoplasm"/>
    <property type="evidence" value="ECO:0000314"/>
    <property type="project" value="UniProtKB"/>
</dbReference>
<dbReference type="GO" id="GO:0003690">
    <property type="term" value="F:double-stranded DNA binding"/>
    <property type="evidence" value="ECO:0000314"/>
    <property type="project" value="UniProtKB"/>
</dbReference>
<dbReference type="GO" id="GO:0003723">
    <property type="term" value="F:RNA binding"/>
    <property type="evidence" value="ECO:0007005"/>
    <property type="project" value="UniProtKB"/>
</dbReference>
<dbReference type="GO" id="GO:0008270">
    <property type="term" value="F:zinc ion binding"/>
    <property type="evidence" value="ECO:0007669"/>
    <property type="project" value="UniProtKB-KW"/>
</dbReference>
<dbReference type="GO" id="GO:0002218">
    <property type="term" value="P:activation of innate immune response"/>
    <property type="evidence" value="ECO:0000314"/>
    <property type="project" value="UniProtKB"/>
</dbReference>
<dbReference type="GO" id="GO:0071360">
    <property type="term" value="P:cellular response to exogenous dsRNA"/>
    <property type="evidence" value="ECO:0000315"/>
    <property type="project" value="UniProtKB"/>
</dbReference>
<dbReference type="GO" id="GO:0051607">
    <property type="term" value="P:defense response to virus"/>
    <property type="evidence" value="ECO:0000318"/>
    <property type="project" value="GO_Central"/>
</dbReference>
<dbReference type="GO" id="GO:0009597">
    <property type="term" value="P:detection of virus"/>
    <property type="evidence" value="ECO:0000314"/>
    <property type="project" value="UniProtKB"/>
</dbReference>
<dbReference type="GO" id="GO:0045087">
    <property type="term" value="P:innate immune response"/>
    <property type="evidence" value="ECO:0007669"/>
    <property type="project" value="UniProtKB-KW"/>
</dbReference>
<dbReference type="GO" id="GO:1900246">
    <property type="term" value="P:positive regulation of RIG-I signaling pathway"/>
    <property type="evidence" value="ECO:0000314"/>
    <property type="project" value="UniProtKB"/>
</dbReference>
<dbReference type="GO" id="GO:0032481">
    <property type="term" value="P:positive regulation of type I interferon production"/>
    <property type="evidence" value="ECO:0000318"/>
    <property type="project" value="GO_Central"/>
</dbReference>
<dbReference type="Gene3D" id="4.10.60.10">
    <property type="entry name" value="Zinc finger, CCHC-type"/>
    <property type="match status" value="1"/>
</dbReference>
<dbReference type="InterPro" id="IPR042509">
    <property type="entry name" value="ZCCHC3"/>
</dbReference>
<dbReference type="InterPro" id="IPR001878">
    <property type="entry name" value="Znf_CCHC"/>
</dbReference>
<dbReference type="InterPro" id="IPR036875">
    <property type="entry name" value="Znf_CCHC_sf"/>
</dbReference>
<dbReference type="PANTHER" id="PTHR22639">
    <property type="entry name" value="GAG-RELATED PROTEIN"/>
    <property type="match status" value="1"/>
</dbReference>
<dbReference type="PANTHER" id="PTHR22639:SF4">
    <property type="entry name" value="ZINC FINGER CCHC DOMAIN-CONTAINING PROTEIN 3"/>
    <property type="match status" value="1"/>
</dbReference>
<dbReference type="Pfam" id="PF23057">
    <property type="entry name" value="RBD_ZCCHC3_1st"/>
    <property type="match status" value="1"/>
</dbReference>
<dbReference type="Pfam" id="PF23058">
    <property type="entry name" value="RBD_ZCCHC3_2nd"/>
    <property type="match status" value="1"/>
</dbReference>
<dbReference type="Pfam" id="PF00098">
    <property type="entry name" value="zf-CCHC"/>
    <property type="match status" value="1"/>
</dbReference>
<dbReference type="SMART" id="SM00343">
    <property type="entry name" value="ZnF_C2HC"/>
    <property type="match status" value="3"/>
</dbReference>
<dbReference type="SUPFAM" id="SSF57756">
    <property type="entry name" value="Retrovirus zinc finger-like domains"/>
    <property type="match status" value="1"/>
</dbReference>
<dbReference type="PROSITE" id="PS50158">
    <property type="entry name" value="ZF_CCHC"/>
    <property type="match status" value="2"/>
</dbReference>
<reference key="1">
    <citation type="journal article" date="2001" name="Nature">
        <title>The DNA sequence and comparative analysis of human chromosome 20.</title>
        <authorList>
            <person name="Deloukas P."/>
            <person name="Matthews L.H."/>
            <person name="Ashurst J.L."/>
            <person name="Burton J."/>
            <person name="Gilbert J.G.R."/>
            <person name="Jones M."/>
            <person name="Stavrides G."/>
            <person name="Almeida J.P."/>
            <person name="Babbage A.K."/>
            <person name="Bagguley C.L."/>
            <person name="Bailey J."/>
            <person name="Barlow K.F."/>
            <person name="Bates K.N."/>
            <person name="Beard L.M."/>
            <person name="Beare D.M."/>
            <person name="Beasley O.P."/>
            <person name="Bird C.P."/>
            <person name="Blakey S.E."/>
            <person name="Bridgeman A.M."/>
            <person name="Brown A.J."/>
            <person name="Buck D."/>
            <person name="Burrill W.D."/>
            <person name="Butler A.P."/>
            <person name="Carder C."/>
            <person name="Carter N.P."/>
            <person name="Chapman J.C."/>
            <person name="Clamp M."/>
            <person name="Clark G."/>
            <person name="Clark L.N."/>
            <person name="Clark S.Y."/>
            <person name="Clee C.M."/>
            <person name="Clegg S."/>
            <person name="Cobley V.E."/>
            <person name="Collier R.E."/>
            <person name="Connor R.E."/>
            <person name="Corby N.R."/>
            <person name="Coulson A."/>
            <person name="Coville G.J."/>
            <person name="Deadman R."/>
            <person name="Dhami P.D."/>
            <person name="Dunn M."/>
            <person name="Ellington A.G."/>
            <person name="Frankland J.A."/>
            <person name="Fraser A."/>
            <person name="French L."/>
            <person name="Garner P."/>
            <person name="Grafham D.V."/>
            <person name="Griffiths C."/>
            <person name="Griffiths M.N.D."/>
            <person name="Gwilliam R."/>
            <person name="Hall R.E."/>
            <person name="Hammond S."/>
            <person name="Harley J.L."/>
            <person name="Heath P.D."/>
            <person name="Ho S."/>
            <person name="Holden J.L."/>
            <person name="Howden P.J."/>
            <person name="Huckle E."/>
            <person name="Hunt A.R."/>
            <person name="Hunt S.E."/>
            <person name="Jekosch K."/>
            <person name="Johnson C.M."/>
            <person name="Johnson D."/>
            <person name="Kay M.P."/>
            <person name="Kimberley A.M."/>
            <person name="King A."/>
            <person name="Knights A."/>
            <person name="Laird G.K."/>
            <person name="Lawlor S."/>
            <person name="Lehvaeslaiho M.H."/>
            <person name="Leversha M.A."/>
            <person name="Lloyd C."/>
            <person name="Lloyd D.M."/>
            <person name="Lovell J.D."/>
            <person name="Marsh V.L."/>
            <person name="Martin S.L."/>
            <person name="McConnachie L.J."/>
            <person name="McLay K."/>
            <person name="McMurray A.A."/>
            <person name="Milne S.A."/>
            <person name="Mistry D."/>
            <person name="Moore M.J.F."/>
            <person name="Mullikin J.C."/>
            <person name="Nickerson T."/>
            <person name="Oliver K."/>
            <person name="Parker A."/>
            <person name="Patel R."/>
            <person name="Pearce T.A.V."/>
            <person name="Peck A.I."/>
            <person name="Phillimore B.J.C.T."/>
            <person name="Prathalingam S.R."/>
            <person name="Plumb R.W."/>
            <person name="Ramsay H."/>
            <person name="Rice C.M."/>
            <person name="Ross M.T."/>
            <person name="Scott C.E."/>
            <person name="Sehra H.K."/>
            <person name="Shownkeen R."/>
            <person name="Sims S."/>
            <person name="Skuce C.D."/>
            <person name="Smith M.L."/>
            <person name="Soderlund C."/>
            <person name="Steward C.A."/>
            <person name="Sulston J.E."/>
            <person name="Swann R.M."/>
            <person name="Sycamore N."/>
            <person name="Taylor R."/>
            <person name="Tee L."/>
            <person name="Thomas D.W."/>
            <person name="Thorpe A."/>
            <person name="Tracey A."/>
            <person name="Tromans A.C."/>
            <person name="Vaudin M."/>
            <person name="Wall M."/>
            <person name="Wallis J.M."/>
            <person name="Whitehead S.L."/>
            <person name="Whittaker P."/>
            <person name="Willey D.L."/>
            <person name="Williams L."/>
            <person name="Williams S.A."/>
            <person name="Wilming L."/>
            <person name="Wray P.W."/>
            <person name="Hubbard T."/>
            <person name="Durbin R.M."/>
            <person name="Bentley D.R."/>
            <person name="Beck S."/>
            <person name="Rogers J."/>
        </authorList>
    </citation>
    <scope>NUCLEOTIDE SEQUENCE [LARGE SCALE GENOMIC DNA]</scope>
</reference>
<reference key="2">
    <citation type="journal article" date="2004" name="Genome Res.">
        <title>The status, quality, and expansion of the NIH full-length cDNA project: the Mammalian Gene Collection (MGC).</title>
        <authorList>
            <consortium name="The MGC Project Team"/>
        </authorList>
    </citation>
    <scope>NUCLEOTIDE SEQUENCE [LARGE SCALE MRNA] (ISOFORMS 1 AND 2)</scope>
    <source>
        <tissue>Liver</tissue>
    </source>
</reference>
<reference key="3">
    <citation type="journal article" date="2005" name="Nat. Biotechnol.">
        <title>Immunoaffinity profiling of tyrosine phosphorylation in cancer cells.</title>
        <authorList>
            <person name="Rush J."/>
            <person name="Moritz A."/>
            <person name="Lee K.A."/>
            <person name="Guo A."/>
            <person name="Goss V.L."/>
            <person name="Spek E.J."/>
            <person name="Zhang H."/>
            <person name="Zha X.-M."/>
            <person name="Polakiewicz R.D."/>
            <person name="Comb M.J."/>
        </authorList>
    </citation>
    <scope>PHOSPHORYLATION [LARGE SCALE ANALYSIS] AT TYR-201</scope>
    <scope>IDENTIFICATION BY MASS SPECTROMETRY [LARGE SCALE ANALYSIS]</scope>
</reference>
<reference key="4">
    <citation type="journal article" date="2011" name="BMC Syst. Biol.">
        <title>Initial characterization of the human central proteome.</title>
        <authorList>
            <person name="Burkard T.R."/>
            <person name="Planyavsky M."/>
            <person name="Kaupe I."/>
            <person name="Breitwieser F.P."/>
            <person name="Buerckstuemmer T."/>
            <person name="Bennett K.L."/>
            <person name="Superti-Furga G."/>
            <person name="Colinge J."/>
        </authorList>
    </citation>
    <scope>IDENTIFICATION BY MASS SPECTROMETRY [LARGE SCALE ANALYSIS]</scope>
</reference>
<reference key="5">
    <citation type="journal article" date="2018" name="Immunity">
        <title>The zinc-finger protein ZCCHC3 binds RNA and facilitates viral RNA sensing and activation of the RIG-I-like receptors.</title>
        <authorList>
            <person name="Lian H."/>
            <person name="Zang R."/>
            <person name="Wei J."/>
            <person name="Ye W."/>
            <person name="Hu M.M."/>
            <person name="Chen Y.D."/>
            <person name="Zhang X.N."/>
            <person name="Guo Y."/>
            <person name="Lei C.Q."/>
            <person name="Yang Q."/>
            <person name="Luo W.W."/>
            <person name="Li S."/>
            <person name="Shu H.B."/>
        </authorList>
    </citation>
    <scope>FUNCTION</scope>
    <scope>INTERACTION WITH IFIH1 AND RIGI</scope>
</reference>
<reference key="6">
    <citation type="journal article" date="2018" name="Nat. Commun.">
        <title>ZCCHC3 is a co-sensor of cGAS for dsDNA recognition in innate immune response.</title>
        <authorList>
            <person name="Lian H."/>
            <person name="Wei J."/>
            <person name="Zang R."/>
            <person name="Ye W."/>
            <person name="Yang Q."/>
            <person name="Zhang X.N."/>
            <person name="Chen Y.D."/>
            <person name="Fu Y.Z."/>
            <person name="Hu M.M."/>
            <person name="Lei C.Q."/>
            <person name="Luo W.W."/>
            <person name="Li S."/>
            <person name="Shu H.B."/>
        </authorList>
    </citation>
    <scope>FUNCTION</scope>
    <scope>SUBCELLULAR LOCATION</scope>
    <scope>INTERACTION WITH CGAS</scope>
</reference>
<comment type="function">
    <text evidence="3 4">Nucleic acid-binding protein involved in innate immune response to DNA and RNA viruses (PubMed:30135424, PubMed:30193849). Binds DNA and RNA in the cytoplasm and acts by promoting recognition of viral nucleic acids by virus sensors, such as RIGI, IFIH1/MDA5 and CGAS (PubMed:30135424, PubMed:30193849). Acts as a co-sensor for recognition of double-stranded DNA (dsDNA) by cGAS in the cytoplasm, thereby playing a role in innate immune response to cytosolic dsDNA and DNA virus (PubMed:30135424). Binds dsDNA and probably acts by promoting sensing of dsDNA by CGAS, leading to enhance CGAS oligomerization and activation (PubMed:30135424). Promotes sensing of viral RNA by RIGI-like receptors proteins RIGI and IFIH1/MDA5 via two mechanisms: binds double-stranded RNA (dsRNA), enhancing the binding of RIGI and IFIH1/MDA5 to dsRNA and promotes 'Lys-63'-linked ubiquitination and subsequent activation of RIGI and IFIH1/MDA5 (PubMed:30193849).</text>
</comment>
<comment type="subunit">
    <text evidence="3 4">Interacts with CGAS (PubMed:30135424). Interacts with RIGI (PubMed:30193849). Interacts with IFIH1/MDA5 (PubMed:30193849).</text>
</comment>
<comment type="subcellular location">
    <subcellularLocation>
        <location evidence="3">Cytoplasm</location>
    </subcellularLocation>
</comment>
<comment type="alternative products">
    <event type="alternative splicing"/>
    <isoform>
        <id>Q9NUD5-1</id>
        <name>1</name>
        <sequence type="displayed"/>
    </isoform>
    <isoform>
        <id>Q9NUD5-2</id>
        <name>2</name>
        <sequence type="described" ref="VSP_055996"/>
    </isoform>
</comment>
<protein>
    <recommendedName>
        <fullName evidence="6">Zinc finger CCHC domain-containing protein 3</fullName>
    </recommendedName>
</protein>
<name>ZCHC3_HUMAN</name>
<organism>
    <name type="scientific">Homo sapiens</name>
    <name type="common">Human</name>
    <dbReference type="NCBI Taxonomy" id="9606"/>
    <lineage>
        <taxon>Eukaryota</taxon>
        <taxon>Metazoa</taxon>
        <taxon>Chordata</taxon>
        <taxon>Craniata</taxon>
        <taxon>Vertebrata</taxon>
        <taxon>Euteleostomi</taxon>
        <taxon>Mammalia</taxon>
        <taxon>Eutheria</taxon>
        <taxon>Euarchontoglires</taxon>
        <taxon>Primates</taxon>
        <taxon>Haplorrhini</taxon>
        <taxon>Catarrhini</taxon>
        <taxon>Hominidae</taxon>
        <taxon>Homo</taxon>
    </lineage>
</organism>
<accession>Q9NUD5</accession>
<accession>Q3B7J3</accession>
<accession>Q6NT79</accession>
<evidence type="ECO:0000255" key="1">
    <source>
        <dbReference type="PROSITE-ProRule" id="PRU00047"/>
    </source>
</evidence>
<evidence type="ECO:0000256" key="2">
    <source>
        <dbReference type="SAM" id="MobiDB-lite"/>
    </source>
</evidence>
<evidence type="ECO:0000269" key="3">
    <source>
    </source>
</evidence>
<evidence type="ECO:0000269" key="4">
    <source>
    </source>
</evidence>
<evidence type="ECO:0000303" key="5">
    <source>
    </source>
</evidence>
<evidence type="ECO:0000305" key="6"/>
<evidence type="ECO:0000312" key="7">
    <source>
        <dbReference type="HGNC" id="HGNC:16230"/>
    </source>
</evidence>
<evidence type="ECO:0007744" key="8">
    <source>
    </source>
</evidence>
<gene>
    <name evidence="7" type="primary">ZCCHC3</name>
    <name evidence="7" type="synonym">C20orf99</name>
</gene>
<proteinExistence type="evidence at protein level"/>
<keyword id="KW-0025">Alternative splicing</keyword>
<keyword id="KW-0051">Antiviral defense</keyword>
<keyword id="KW-0963">Cytoplasm</keyword>
<keyword id="KW-0238">DNA-binding</keyword>
<keyword id="KW-0391">Immunity</keyword>
<keyword id="KW-0399">Innate immunity</keyword>
<keyword id="KW-0479">Metal-binding</keyword>
<keyword id="KW-0597">Phosphoprotein</keyword>
<keyword id="KW-1267">Proteomics identification</keyword>
<keyword id="KW-1185">Reference proteome</keyword>
<keyword id="KW-0677">Repeat</keyword>
<keyword id="KW-0694">RNA-binding</keyword>
<keyword id="KW-0862">Zinc</keyword>
<keyword id="KW-0863">Zinc-finger</keyword>
<feature type="chain" id="PRO_0000150951" description="Zinc finger CCHC domain-containing protein 3">
    <location>
        <begin position="1"/>
        <end position="403"/>
    </location>
</feature>
<feature type="zinc finger region" description="CCHC-type 1" evidence="1">
    <location>
        <begin position="335"/>
        <end position="350"/>
    </location>
</feature>
<feature type="zinc finger region" description="CCHC-type 2" evidence="1">
    <location>
        <begin position="352"/>
        <end position="368"/>
    </location>
</feature>
<feature type="zinc finger region" description="CCHC-type 3" evidence="1">
    <location>
        <begin position="372"/>
        <end position="387"/>
    </location>
</feature>
<feature type="region of interest" description="Disordered" evidence="2">
    <location>
        <begin position="1"/>
        <end position="158"/>
    </location>
</feature>
<feature type="compositionally biased region" description="Basic and acidic residues" evidence="2">
    <location>
        <begin position="26"/>
        <end position="38"/>
    </location>
</feature>
<feature type="compositionally biased region" description="Basic and acidic residues" evidence="2">
    <location>
        <begin position="47"/>
        <end position="65"/>
    </location>
</feature>
<feature type="compositionally biased region" description="Gly residues" evidence="2">
    <location>
        <begin position="67"/>
        <end position="79"/>
    </location>
</feature>
<feature type="compositionally biased region" description="Basic and acidic residues" evidence="2">
    <location>
        <begin position="95"/>
        <end position="121"/>
    </location>
</feature>
<feature type="compositionally biased region" description="Low complexity" evidence="2">
    <location>
        <begin position="128"/>
        <end position="139"/>
    </location>
</feature>
<feature type="modified residue" description="Phosphotyrosine" evidence="8">
    <location>
        <position position="201"/>
    </location>
</feature>
<feature type="splice variant" id="VSP_055996" description="In isoform 2." evidence="5">
    <location>
        <begin position="49"/>
        <end position="212"/>
    </location>
</feature>
<feature type="sequence conflict" description="In Ref. 2; AAI07585." evidence="6" ref="2">
    <original>E</original>
    <variation>D</variation>
    <location>
        <position position="262"/>
    </location>
</feature>